<proteinExistence type="inferred from homology"/>
<feature type="chain" id="PRO_1000190313" description="RNA-binding protein Hfq">
    <location>
        <begin position="1"/>
        <end position="79"/>
    </location>
</feature>
<feature type="domain" description="Sm" evidence="2">
    <location>
        <begin position="10"/>
        <end position="69"/>
    </location>
</feature>
<accession>A9AH01</accession>
<comment type="function">
    <text evidence="1">RNA chaperone that binds small regulatory RNA (sRNAs) and mRNAs to facilitate mRNA translational regulation in response to envelope stress, environmental stress and changes in metabolite concentrations. Also binds with high specificity to tRNAs.</text>
</comment>
<comment type="subunit">
    <text evidence="1">Homohexamer.</text>
</comment>
<comment type="similarity">
    <text evidence="1">Belongs to the Hfq family.</text>
</comment>
<dbReference type="EMBL" id="CP000868">
    <property type="protein sequence ID" value="ABX15156.1"/>
    <property type="molecule type" value="Genomic_DNA"/>
</dbReference>
<dbReference type="EMBL" id="AP009385">
    <property type="protein sequence ID" value="BAG43695.1"/>
    <property type="molecule type" value="Genomic_DNA"/>
</dbReference>
<dbReference type="RefSeq" id="WP_006399927.1">
    <property type="nucleotide sequence ID" value="NC_010804.1"/>
</dbReference>
<dbReference type="SMR" id="A9AH01"/>
<dbReference type="STRING" id="395019.BMULJ_01775"/>
<dbReference type="GeneID" id="98105673"/>
<dbReference type="KEGG" id="bmj:BMULJ_01775"/>
<dbReference type="KEGG" id="bmu:Bmul_1468"/>
<dbReference type="eggNOG" id="COG1923">
    <property type="taxonomic scope" value="Bacteria"/>
</dbReference>
<dbReference type="HOGENOM" id="CLU_113688_2_2_4"/>
<dbReference type="Proteomes" id="UP000008815">
    <property type="component" value="Chromosome 1"/>
</dbReference>
<dbReference type="GO" id="GO:0005829">
    <property type="term" value="C:cytosol"/>
    <property type="evidence" value="ECO:0007669"/>
    <property type="project" value="TreeGrafter"/>
</dbReference>
<dbReference type="GO" id="GO:0003723">
    <property type="term" value="F:RNA binding"/>
    <property type="evidence" value="ECO:0007669"/>
    <property type="project" value="UniProtKB-UniRule"/>
</dbReference>
<dbReference type="GO" id="GO:0006355">
    <property type="term" value="P:regulation of DNA-templated transcription"/>
    <property type="evidence" value="ECO:0007669"/>
    <property type="project" value="InterPro"/>
</dbReference>
<dbReference type="GO" id="GO:0043487">
    <property type="term" value="P:regulation of RNA stability"/>
    <property type="evidence" value="ECO:0007669"/>
    <property type="project" value="TreeGrafter"/>
</dbReference>
<dbReference type="GO" id="GO:0045974">
    <property type="term" value="P:regulation of translation, ncRNA-mediated"/>
    <property type="evidence" value="ECO:0007669"/>
    <property type="project" value="TreeGrafter"/>
</dbReference>
<dbReference type="CDD" id="cd01716">
    <property type="entry name" value="Hfq"/>
    <property type="match status" value="1"/>
</dbReference>
<dbReference type="FunFam" id="2.30.30.100:FF:000001">
    <property type="entry name" value="RNA-binding protein Hfq"/>
    <property type="match status" value="1"/>
</dbReference>
<dbReference type="Gene3D" id="2.30.30.100">
    <property type="match status" value="1"/>
</dbReference>
<dbReference type="HAMAP" id="MF_00436">
    <property type="entry name" value="Hfq"/>
    <property type="match status" value="1"/>
</dbReference>
<dbReference type="InterPro" id="IPR005001">
    <property type="entry name" value="Hfq"/>
</dbReference>
<dbReference type="InterPro" id="IPR010920">
    <property type="entry name" value="LSM_dom_sf"/>
</dbReference>
<dbReference type="InterPro" id="IPR047575">
    <property type="entry name" value="Sm"/>
</dbReference>
<dbReference type="NCBIfam" id="TIGR02383">
    <property type="entry name" value="Hfq"/>
    <property type="match status" value="1"/>
</dbReference>
<dbReference type="NCBIfam" id="NF001602">
    <property type="entry name" value="PRK00395.1"/>
    <property type="match status" value="1"/>
</dbReference>
<dbReference type="PANTHER" id="PTHR34772">
    <property type="entry name" value="RNA-BINDING PROTEIN HFQ"/>
    <property type="match status" value="1"/>
</dbReference>
<dbReference type="PANTHER" id="PTHR34772:SF1">
    <property type="entry name" value="RNA-BINDING PROTEIN HFQ"/>
    <property type="match status" value="1"/>
</dbReference>
<dbReference type="Pfam" id="PF17209">
    <property type="entry name" value="Hfq"/>
    <property type="match status" value="1"/>
</dbReference>
<dbReference type="SUPFAM" id="SSF50182">
    <property type="entry name" value="Sm-like ribonucleoproteins"/>
    <property type="match status" value="1"/>
</dbReference>
<dbReference type="PROSITE" id="PS52002">
    <property type="entry name" value="SM"/>
    <property type="match status" value="1"/>
</dbReference>
<sequence length="79" mass="8849">MSNKGQLLQDPFLNALRKEHVPVSIYLVNGIKLQGNIESFDQYVVLLRNTVTQMVYKHAISTVVPARPVNFHPDAEASS</sequence>
<gene>
    <name evidence="1" type="primary">hfq</name>
    <name type="ordered locus">Bmul_1468</name>
    <name type="ordered locus">BMULJ_01775</name>
</gene>
<name>HFQ_BURM1</name>
<reference key="1">
    <citation type="submission" date="2007-10" db="EMBL/GenBank/DDBJ databases">
        <title>Complete sequence of chromosome 1 of Burkholderia multivorans ATCC 17616.</title>
        <authorList>
            <person name="Copeland A."/>
            <person name="Lucas S."/>
            <person name="Lapidus A."/>
            <person name="Barry K."/>
            <person name="Glavina del Rio T."/>
            <person name="Dalin E."/>
            <person name="Tice H."/>
            <person name="Pitluck S."/>
            <person name="Chain P."/>
            <person name="Malfatti S."/>
            <person name="Shin M."/>
            <person name="Vergez L."/>
            <person name="Schmutz J."/>
            <person name="Larimer F."/>
            <person name="Land M."/>
            <person name="Hauser L."/>
            <person name="Kyrpides N."/>
            <person name="Kim E."/>
            <person name="Tiedje J."/>
            <person name="Richardson P."/>
        </authorList>
    </citation>
    <scope>NUCLEOTIDE SEQUENCE [LARGE SCALE GENOMIC DNA]</scope>
    <source>
        <strain>ATCC 17616 / 249</strain>
    </source>
</reference>
<reference key="2">
    <citation type="submission" date="2007-04" db="EMBL/GenBank/DDBJ databases">
        <title>Complete genome sequence of Burkholderia multivorans ATCC 17616.</title>
        <authorList>
            <person name="Ohtsubo Y."/>
            <person name="Yamashita A."/>
            <person name="Kurokawa K."/>
            <person name="Takami H."/>
            <person name="Yuhara S."/>
            <person name="Nishiyama E."/>
            <person name="Endo R."/>
            <person name="Miyazaki R."/>
            <person name="Ono A."/>
            <person name="Yano K."/>
            <person name="Ito M."/>
            <person name="Sota M."/>
            <person name="Yuji N."/>
            <person name="Hattori M."/>
            <person name="Tsuda M."/>
        </authorList>
    </citation>
    <scope>NUCLEOTIDE SEQUENCE [LARGE SCALE GENOMIC DNA]</scope>
    <source>
        <strain>ATCC 17616 / 249</strain>
    </source>
</reference>
<protein>
    <recommendedName>
        <fullName evidence="1">RNA-binding protein Hfq</fullName>
    </recommendedName>
</protein>
<evidence type="ECO:0000255" key="1">
    <source>
        <dbReference type="HAMAP-Rule" id="MF_00436"/>
    </source>
</evidence>
<evidence type="ECO:0000255" key="2">
    <source>
        <dbReference type="PROSITE-ProRule" id="PRU01346"/>
    </source>
</evidence>
<keyword id="KW-1185">Reference proteome</keyword>
<keyword id="KW-0694">RNA-binding</keyword>
<keyword id="KW-0346">Stress response</keyword>
<organism>
    <name type="scientific">Burkholderia multivorans (strain ATCC 17616 / 249)</name>
    <dbReference type="NCBI Taxonomy" id="395019"/>
    <lineage>
        <taxon>Bacteria</taxon>
        <taxon>Pseudomonadati</taxon>
        <taxon>Pseudomonadota</taxon>
        <taxon>Betaproteobacteria</taxon>
        <taxon>Burkholderiales</taxon>
        <taxon>Burkholderiaceae</taxon>
        <taxon>Burkholderia</taxon>
        <taxon>Burkholderia cepacia complex</taxon>
    </lineage>
</organism>